<feature type="signal peptide" evidence="1">
    <location>
        <begin position="1"/>
        <end position="30"/>
    </location>
</feature>
<feature type="chain" id="PRO_1000064451" description="Periplasmic trehalase">
    <location>
        <begin position="31"/>
        <end position="565"/>
    </location>
</feature>
<feature type="region of interest" description="Disordered" evidence="2">
    <location>
        <begin position="538"/>
        <end position="565"/>
    </location>
</feature>
<feature type="compositionally biased region" description="Polar residues" evidence="2">
    <location>
        <begin position="548"/>
        <end position="565"/>
    </location>
</feature>
<feature type="active site" description="Proton donor/acceptor" evidence="1">
    <location>
        <position position="312"/>
    </location>
</feature>
<feature type="active site" description="Proton donor/acceptor" evidence="1">
    <location>
        <position position="496"/>
    </location>
</feature>
<feature type="binding site" evidence="1">
    <location>
        <position position="152"/>
    </location>
    <ligand>
        <name>substrate</name>
    </ligand>
</feature>
<feature type="binding site" evidence="1">
    <location>
        <begin position="159"/>
        <end position="160"/>
    </location>
    <ligand>
        <name>substrate</name>
    </ligand>
</feature>
<feature type="binding site" evidence="1">
    <location>
        <position position="196"/>
    </location>
    <ligand>
        <name>substrate</name>
    </ligand>
</feature>
<feature type="binding site" evidence="1">
    <location>
        <begin position="205"/>
        <end position="207"/>
    </location>
    <ligand>
        <name>substrate</name>
    </ligand>
</feature>
<feature type="binding site" evidence="1">
    <location>
        <begin position="277"/>
        <end position="279"/>
    </location>
    <ligand>
        <name>substrate</name>
    </ligand>
</feature>
<feature type="binding site" evidence="1">
    <location>
        <position position="310"/>
    </location>
    <ligand>
        <name>substrate</name>
    </ligand>
</feature>
<feature type="binding site" evidence="1">
    <location>
        <position position="511"/>
    </location>
    <ligand>
        <name>substrate</name>
    </ligand>
</feature>
<dbReference type="EC" id="3.2.1.28" evidence="1"/>
<dbReference type="EMBL" id="CP000802">
    <property type="protein sequence ID" value="ABV05635.1"/>
    <property type="molecule type" value="Genomic_DNA"/>
</dbReference>
<dbReference type="RefSeq" id="WP_000841714.1">
    <property type="nucleotide sequence ID" value="NC_009800.1"/>
</dbReference>
<dbReference type="SMR" id="A7ZZD1"/>
<dbReference type="CAZy" id="GH37">
    <property type="family name" value="Glycoside Hydrolase Family 37"/>
</dbReference>
<dbReference type="KEGG" id="ecx:EcHS_A1301"/>
<dbReference type="HOGENOM" id="CLU_006451_3_1_6"/>
<dbReference type="GO" id="GO:0042597">
    <property type="term" value="C:periplasmic space"/>
    <property type="evidence" value="ECO:0007669"/>
    <property type="project" value="UniProtKB-SubCell"/>
</dbReference>
<dbReference type="GO" id="GO:0004555">
    <property type="term" value="F:alpha,alpha-trehalase activity"/>
    <property type="evidence" value="ECO:0007669"/>
    <property type="project" value="UniProtKB-UniRule"/>
</dbReference>
<dbReference type="GO" id="GO:0071474">
    <property type="term" value="P:cellular hyperosmotic response"/>
    <property type="evidence" value="ECO:0007669"/>
    <property type="project" value="InterPro"/>
</dbReference>
<dbReference type="GO" id="GO:0005993">
    <property type="term" value="P:trehalose catabolic process"/>
    <property type="evidence" value="ECO:0007669"/>
    <property type="project" value="InterPro"/>
</dbReference>
<dbReference type="FunFam" id="1.50.10.10:FF:000003">
    <property type="entry name" value="Cytoplasmic trehalase"/>
    <property type="match status" value="1"/>
</dbReference>
<dbReference type="Gene3D" id="1.50.10.10">
    <property type="match status" value="1"/>
</dbReference>
<dbReference type="HAMAP" id="MF_01060">
    <property type="entry name" value="Peripl_trehalase"/>
    <property type="match status" value="1"/>
</dbReference>
<dbReference type="InterPro" id="IPR008928">
    <property type="entry name" value="6-hairpin_glycosidase_sf"/>
</dbReference>
<dbReference type="InterPro" id="IPR012341">
    <property type="entry name" value="6hp_glycosidase-like_sf"/>
</dbReference>
<dbReference type="InterPro" id="IPR001661">
    <property type="entry name" value="Glyco_hydro_37"/>
</dbReference>
<dbReference type="InterPro" id="IPR018232">
    <property type="entry name" value="Glyco_hydro_37_CS"/>
</dbReference>
<dbReference type="InterPro" id="IPR023720">
    <property type="entry name" value="Trehalase_periplasmic"/>
</dbReference>
<dbReference type="NCBIfam" id="NF009773">
    <property type="entry name" value="PRK13270.1"/>
    <property type="match status" value="1"/>
</dbReference>
<dbReference type="NCBIfam" id="NF009774">
    <property type="entry name" value="PRK13271.1"/>
    <property type="match status" value="1"/>
</dbReference>
<dbReference type="PANTHER" id="PTHR23403">
    <property type="entry name" value="TREHALASE"/>
    <property type="match status" value="1"/>
</dbReference>
<dbReference type="PANTHER" id="PTHR23403:SF1">
    <property type="entry name" value="TREHALASE"/>
    <property type="match status" value="1"/>
</dbReference>
<dbReference type="Pfam" id="PF01204">
    <property type="entry name" value="Trehalase"/>
    <property type="match status" value="1"/>
</dbReference>
<dbReference type="PRINTS" id="PR00744">
    <property type="entry name" value="GLHYDRLASE37"/>
</dbReference>
<dbReference type="SUPFAM" id="SSF48208">
    <property type="entry name" value="Six-hairpin glycosidases"/>
    <property type="match status" value="1"/>
</dbReference>
<dbReference type="PROSITE" id="PS00927">
    <property type="entry name" value="TREHALASE_1"/>
    <property type="match status" value="1"/>
</dbReference>
<dbReference type="PROSITE" id="PS00928">
    <property type="entry name" value="TREHALASE_2"/>
    <property type="match status" value="1"/>
</dbReference>
<evidence type="ECO:0000255" key="1">
    <source>
        <dbReference type="HAMAP-Rule" id="MF_01060"/>
    </source>
</evidence>
<evidence type="ECO:0000256" key="2">
    <source>
        <dbReference type="SAM" id="MobiDB-lite"/>
    </source>
</evidence>
<name>TREA_ECOHS</name>
<reference key="1">
    <citation type="journal article" date="2008" name="J. Bacteriol.">
        <title>The pangenome structure of Escherichia coli: comparative genomic analysis of E. coli commensal and pathogenic isolates.</title>
        <authorList>
            <person name="Rasko D.A."/>
            <person name="Rosovitz M.J."/>
            <person name="Myers G.S.A."/>
            <person name="Mongodin E.F."/>
            <person name="Fricke W.F."/>
            <person name="Gajer P."/>
            <person name="Crabtree J."/>
            <person name="Sebaihia M."/>
            <person name="Thomson N.R."/>
            <person name="Chaudhuri R."/>
            <person name="Henderson I.R."/>
            <person name="Sperandio V."/>
            <person name="Ravel J."/>
        </authorList>
    </citation>
    <scope>NUCLEOTIDE SEQUENCE [LARGE SCALE GENOMIC DNA]</scope>
    <source>
        <strain>HS</strain>
    </source>
</reference>
<protein>
    <recommendedName>
        <fullName evidence="1">Periplasmic trehalase</fullName>
        <ecNumber evidence="1">3.2.1.28</ecNumber>
    </recommendedName>
    <alternativeName>
        <fullName evidence="1">Alpha,alpha-trehalase</fullName>
    </alternativeName>
    <alternativeName>
        <fullName evidence="1">Alpha,alpha-trehalose glucohydrolase</fullName>
    </alternativeName>
</protein>
<keyword id="KW-0326">Glycosidase</keyword>
<keyword id="KW-0378">Hydrolase</keyword>
<keyword id="KW-0574">Periplasm</keyword>
<keyword id="KW-0732">Signal</keyword>
<comment type="function">
    <text evidence="1">Provides the cells with the ability to utilize trehalose at high osmolarity by splitting it into glucose molecules that can subsequently be taken up by the phosphotransferase-mediated uptake system.</text>
</comment>
<comment type="catalytic activity">
    <reaction evidence="1">
        <text>alpha,alpha-trehalose + H2O = alpha-D-glucose + beta-D-glucose</text>
        <dbReference type="Rhea" id="RHEA:32675"/>
        <dbReference type="ChEBI" id="CHEBI:15377"/>
        <dbReference type="ChEBI" id="CHEBI:15903"/>
        <dbReference type="ChEBI" id="CHEBI:16551"/>
        <dbReference type="ChEBI" id="CHEBI:17925"/>
        <dbReference type="EC" id="3.2.1.28"/>
    </reaction>
</comment>
<comment type="subunit">
    <text evidence="1">Monomer.</text>
</comment>
<comment type="subcellular location">
    <subcellularLocation>
        <location evidence="1">Periplasm</location>
    </subcellularLocation>
</comment>
<comment type="similarity">
    <text evidence="1">Belongs to the glycosyl hydrolase 37 family.</text>
</comment>
<organism>
    <name type="scientific">Escherichia coli O9:H4 (strain HS)</name>
    <dbReference type="NCBI Taxonomy" id="331112"/>
    <lineage>
        <taxon>Bacteria</taxon>
        <taxon>Pseudomonadati</taxon>
        <taxon>Pseudomonadota</taxon>
        <taxon>Gammaproteobacteria</taxon>
        <taxon>Enterobacterales</taxon>
        <taxon>Enterobacteriaceae</taxon>
        <taxon>Escherichia</taxon>
    </lineage>
</organism>
<proteinExistence type="inferred from homology"/>
<gene>
    <name evidence="1" type="primary">treA</name>
    <name type="ordered locus">EcHS_A1301</name>
</gene>
<accession>A7ZZD1</accession>
<sequence>MKSPAPSRPQKMALIPACIFLCFAALSVQAEETPVTPQPPDILLGPLFNDVQNAKLFPDQKTFADAVPNSDPLMILADYRMQQNQSGFDLRHFVNVNFTLPKEGEKYVPPEGQSLREHIDGLWPVLTRSTENTEKWDSLLPLPEPYVVPGGRFREVYYWDSYFTMLGLAESGHWDKVADMVANFAHEIDTYGHIPNGNRSYYLSRSQPPFFALMVELLAQHEGDAALKQYLPQMQKEYAYWMDGVENLQAGQQEKRVVKLQDGTLLNRYWDDRDTPRPESWVEDIATAKSNPNRPATEIYRDLRSAAASGWDFSSRWMDNPQQLNTLRTTSIVPVDLNSLMFKMEKILARASKAAGDNAMANQYETLANARQKGIEKYLWNDQQGWYADYDLKSHKVRNQLTAAALFPLYVNAAAKDRANKMATATKTHLLQPGGLNTTSVKSGQQWDAPNGWAPLQWVATEGLQNYGQKEVAMDISWHFLTNVQHTYDREKKLVEKYDVSTTGTGGGGGEYPLQDGFGWTNGVTLKMLDLICPKEQPCDNVPATRPTVKSATTQPSTKEAQPTP</sequence>